<accession>B2U932</accession>
<gene>
    <name evidence="1" type="primary">xseB</name>
    <name type="ordered locus">Rpic_2428</name>
</gene>
<reference key="1">
    <citation type="submission" date="2008-05" db="EMBL/GenBank/DDBJ databases">
        <title>Complete sequence of chromosome 1 of Ralstonia pickettii 12J.</title>
        <authorList>
            <person name="Lucas S."/>
            <person name="Copeland A."/>
            <person name="Lapidus A."/>
            <person name="Glavina del Rio T."/>
            <person name="Dalin E."/>
            <person name="Tice H."/>
            <person name="Bruce D."/>
            <person name="Goodwin L."/>
            <person name="Pitluck S."/>
            <person name="Meincke L."/>
            <person name="Brettin T."/>
            <person name="Detter J.C."/>
            <person name="Han C."/>
            <person name="Kuske C.R."/>
            <person name="Schmutz J."/>
            <person name="Larimer F."/>
            <person name="Land M."/>
            <person name="Hauser L."/>
            <person name="Kyrpides N."/>
            <person name="Mikhailova N."/>
            <person name="Marsh T."/>
            <person name="Richardson P."/>
        </authorList>
    </citation>
    <scope>NUCLEOTIDE SEQUENCE [LARGE SCALE GENOMIC DNA]</scope>
    <source>
        <strain>12J</strain>
    </source>
</reference>
<protein>
    <recommendedName>
        <fullName evidence="1">Exodeoxyribonuclease 7 small subunit</fullName>
        <ecNumber evidence="1">3.1.11.6</ecNumber>
    </recommendedName>
    <alternativeName>
        <fullName evidence="1">Exodeoxyribonuclease VII small subunit</fullName>
        <shortName evidence="1">Exonuclease VII small subunit</shortName>
    </alternativeName>
</protein>
<organism>
    <name type="scientific">Ralstonia pickettii (strain 12J)</name>
    <dbReference type="NCBI Taxonomy" id="402626"/>
    <lineage>
        <taxon>Bacteria</taxon>
        <taxon>Pseudomonadati</taxon>
        <taxon>Pseudomonadota</taxon>
        <taxon>Betaproteobacteria</taxon>
        <taxon>Burkholderiales</taxon>
        <taxon>Burkholderiaceae</taxon>
        <taxon>Ralstonia</taxon>
    </lineage>
</organism>
<proteinExistence type="inferred from homology"/>
<comment type="function">
    <text evidence="1">Bidirectionally degrades single-stranded DNA into large acid-insoluble oligonucleotides, which are then degraded further into small acid-soluble oligonucleotides.</text>
</comment>
<comment type="catalytic activity">
    <reaction evidence="1">
        <text>Exonucleolytic cleavage in either 5'- to 3'- or 3'- to 5'-direction to yield nucleoside 5'-phosphates.</text>
        <dbReference type="EC" id="3.1.11.6"/>
    </reaction>
</comment>
<comment type="subunit">
    <text evidence="1">Heterooligomer composed of large and small subunits.</text>
</comment>
<comment type="subcellular location">
    <subcellularLocation>
        <location evidence="1">Cytoplasm</location>
    </subcellularLocation>
</comment>
<comment type="similarity">
    <text evidence="1">Belongs to the XseB family.</text>
</comment>
<dbReference type="EC" id="3.1.11.6" evidence="1"/>
<dbReference type="EMBL" id="CP001068">
    <property type="protein sequence ID" value="ACD27562.1"/>
    <property type="molecule type" value="Genomic_DNA"/>
</dbReference>
<dbReference type="SMR" id="B2U932"/>
<dbReference type="STRING" id="402626.Rpic_2428"/>
<dbReference type="KEGG" id="rpi:Rpic_2428"/>
<dbReference type="eggNOG" id="COG1722">
    <property type="taxonomic scope" value="Bacteria"/>
</dbReference>
<dbReference type="HOGENOM" id="CLU_145918_2_0_4"/>
<dbReference type="GO" id="GO:0005829">
    <property type="term" value="C:cytosol"/>
    <property type="evidence" value="ECO:0007669"/>
    <property type="project" value="TreeGrafter"/>
</dbReference>
<dbReference type="GO" id="GO:0009318">
    <property type="term" value="C:exodeoxyribonuclease VII complex"/>
    <property type="evidence" value="ECO:0007669"/>
    <property type="project" value="InterPro"/>
</dbReference>
<dbReference type="GO" id="GO:0008855">
    <property type="term" value="F:exodeoxyribonuclease VII activity"/>
    <property type="evidence" value="ECO:0007669"/>
    <property type="project" value="UniProtKB-UniRule"/>
</dbReference>
<dbReference type="GO" id="GO:0006308">
    <property type="term" value="P:DNA catabolic process"/>
    <property type="evidence" value="ECO:0007669"/>
    <property type="project" value="UniProtKB-UniRule"/>
</dbReference>
<dbReference type="Gene3D" id="1.10.287.1040">
    <property type="entry name" value="Exonuclease VII, small subunit"/>
    <property type="match status" value="1"/>
</dbReference>
<dbReference type="HAMAP" id="MF_00337">
    <property type="entry name" value="Exonuc_7_S"/>
    <property type="match status" value="1"/>
</dbReference>
<dbReference type="InterPro" id="IPR003761">
    <property type="entry name" value="Exonuc_VII_S"/>
</dbReference>
<dbReference type="InterPro" id="IPR037004">
    <property type="entry name" value="Exonuc_VII_ssu_sf"/>
</dbReference>
<dbReference type="NCBIfam" id="NF002141">
    <property type="entry name" value="PRK00977.1-5"/>
    <property type="match status" value="1"/>
</dbReference>
<dbReference type="NCBIfam" id="TIGR01280">
    <property type="entry name" value="xseB"/>
    <property type="match status" value="1"/>
</dbReference>
<dbReference type="PANTHER" id="PTHR34137">
    <property type="entry name" value="EXODEOXYRIBONUCLEASE 7 SMALL SUBUNIT"/>
    <property type="match status" value="1"/>
</dbReference>
<dbReference type="PANTHER" id="PTHR34137:SF1">
    <property type="entry name" value="EXODEOXYRIBONUCLEASE 7 SMALL SUBUNIT"/>
    <property type="match status" value="1"/>
</dbReference>
<dbReference type="Pfam" id="PF02609">
    <property type="entry name" value="Exonuc_VII_S"/>
    <property type="match status" value="1"/>
</dbReference>
<dbReference type="PIRSF" id="PIRSF006488">
    <property type="entry name" value="Exonuc_VII_S"/>
    <property type="match status" value="1"/>
</dbReference>
<dbReference type="SUPFAM" id="SSF116842">
    <property type="entry name" value="XseB-like"/>
    <property type="match status" value="1"/>
</dbReference>
<sequence length="94" mass="9936">MPRAPNDAPSASATPSATPASYEAAMAELETLVASMESGELPLEASLAAYRRGAELVKYCQQVLERVEQQVRVLDGDALKPLGDDSNTNEQGDA</sequence>
<keyword id="KW-0963">Cytoplasm</keyword>
<keyword id="KW-0269">Exonuclease</keyword>
<keyword id="KW-0378">Hydrolase</keyword>
<keyword id="KW-0540">Nuclease</keyword>
<feature type="chain" id="PRO_1000119945" description="Exodeoxyribonuclease 7 small subunit">
    <location>
        <begin position="1"/>
        <end position="94"/>
    </location>
</feature>
<feature type="region of interest" description="Disordered" evidence="2">
    <location>
        <begin position="1"/>
        <end position="21"/>
    </location>
</feature>
<evidence type="ECO:0000255" key="1">
    <source>
        <dbReference type="HAMAP-Rule" id="MF_00337"/>
    </source>
</evidence>
<evidence type="ECO:0000256" key="2">
    <source>
        <dbReference type="SAM" id="MobiDB-lite"/>
    </source>
</evidence>
<name>EX7S_RALPJ</name>